<dbReference type="EMBL" id="AAVQ01000001">
    <property type="protein sequence ID" value="EAZ63981.2"/>
    <property type="molecule type" value="Genomic_DNA"/>
</dbReference>
<dbReference type="RefSeq" id="XP_001388004.2">
    <property type="nucleotide sequence ID" value="XM_001387967.1"/>
</dbReference>
<dbReference type="SMR" id="A3GGU2"/>
<dbReference type="FunCoup" id="A3GGU2">
    <property type="interactions" value="1145"/>
</dbReference>
<dbReference type="STRING" id="322104.A3GGU2"/>
<dbReference type="GeneID" id="4851491"/>
<dbReference type="KEGG" id="pic:PICST_80765"/>
<dbReference type="eggNOG" id="KOG0122">
    <property type="taxonomic scope" value="Eukaryota"/>
</dbReference>
<dbReference type="HOGENOM" id="CLU_034595_0_0_1"/>
<dbReference type="InParanoid" id="A3GGU2"/>
<dbReference type="OMA" id="ICQGDHF"/>
<dbReference type="OrthoDB" id="639027at2759"/>
<dbReference type="Proteomes" id="UP000002258">
    <property type="component" value="Chromosome 1"/>
</dbReference>
<dbReference type="GO" id="GO:0016282">
    <property type="term" value="C:eukaryotic 43S preinitiation complex"/>
    <property type="evidence" value="ECO:0007669"/>
    <property type="project" value="UniProtKB-UniRule"/>
</dbReference>
<dbReference type="GO" id="GO:0033290">
    <property type="term" value="C:eukaryotic 48S preinitiation complex"/>
    <property type="evidence" value="ECO:0007669"/>
    <property type="project" value="UniProtKB-UniRule"/>
</dbReference>
<dbReference type="GO" id="GO:0071540">
    <property type="term" value="C:eukaryotic translation initiation factor 3 complex, eIF3e"/>
    <property type="evidence" value="ECO:0007669"/>
    <property type="project" value="EnsemblFungi"/>
</dbReference>
<dbReference type="GO" id="GO:0071541">
    <property type="term" value="C:eukaryotic translation initiation factor 3 complex, eIF3m"/>
    <property type="evidence" value="ECO:0007669"/>
    <property type="project" value="EnsemblFungi"/>
</dbReference>
<dbReference type="GO" id="GO:0043614">
    <property type="term" value="C:multi-eIF complex"/>
    <property type="evidence" value="ECO:0007669"/>
    <property type="project" value="EnsemblFungi"/>
</dbReference>
<dbReference type="GO" id="GO:0003723">
    <property type="term" value="F:RNA binding"/>
    <property type="evidence" value="ECO:0007669"/>
    <property type="project" value="UniProtKB-UniRule"/>
</dbReference>
<dbReference type="GO" id="GO:0003743">
    <property type="term" value="F:translation initiation factor activity"/>
    <property type="evidence" value="ECO:0007669"/>
    <property type="project" value="UniProtKB-UniRule"/>
</dbReference>
<dbReference type="GO" id="GO:0001732">
    <property type="term" value="P:formation of cytoplasmic translation initiation complex"/>
    <property type="evidence" value="ECO:0007669"/>
    <property type="project" value="UniProtKB-UniRule"/>
</dbReference>
<dbReference type="GO" id="GO:0002188">
    <property type="term" value="P:translation reinitiation"/>
    <property type="evidence" value="ECO:0007669"/>
    <property type="project" value="EnsemblFungi"/>
</dbReference>
<dbReference type="GO" id="GO:0006415">
    <property type="term" value="P:translational termination"/>
    <property type="evidence" value="ECO:0007669"/>
    <property type="project" value="EnsemblFungi"/>
</dbReference>
<dbReference type="CDD" id="cd12933">
    <property type="entry name" value="eIF3G"/>
    <property type="match status" value="1"/>
</dbReference>
<dbReference type="CDD" id="cd12408">
    <property type="entry name" value="RRM_eIF3G_like"/>
    <property type="match status" value="1"/>
</dbReference>
<dbReference type="Gene3D" id="3.30.70.330">
    <property type="match status" value="1"/>
</dbReference>
<dbReference type="HAMAP" id="MF_03006">
    <property type="entry name" value="eIF3g"/>
    <property type="match status" value="1"/>
</dbReference>
<dbReference type="InterPro" id="IPR017334">
    <property type="entry name" value="eIF3_g"/>
</dbReference>
<dbReference type="InterPro" id="IPR024675">
    <property type="entry name" value="eIF3g_N"/>
</dbReference>
<dbReference type="InterPro" id="IPR034240">
    <property type="entry name" value="eIF3G_RRM"/>
</dbReference>
<dbReference type="InterPro" id="IPR012677">
    <property type="entry name" value="Nucleotide-bd_a/b_plait_sf"/>
</dbReference>
<dbReference type="InterPro" id="IPR035979">
    <property type="entry name" value="RBD_domain_sf"/>
</dbReference>
<dbReference type="InterPro" id="IPR000504">
    <property type="entry name" value="RRM_dom"/>
</dbReference>
<dbReference type="PANTHER" id="PTHR10352">
    <property type="entry name" value="EUKARYOTIC TRANSLATION INITIATION FACTOR 3 SUBUNIT G"/>
    <property type="match status" value="1"/>
</dbReference>
<dbReference type="Pfam" id="PF12353">
    <property type="entry name" value="eIF3g"/>
    <property type="match status" value="1"/>
</dbReference>
<dbReference type="Pfam" id="PF00076">
    <property type="entry name" value="RRM_1"/>
    <property type="match status" value="1"/>
</dbReference>
<dbReference type="PIRSF" id="PIRSF037949">
    <property type="entry name" value="Transl_init_eIF-3_RNA-bind"/>
    <property type="match status" value="1"/>
</dbReference>
<dbReference type="SMART" id="SM00360">
    <property type="entry name" value="RRM"/>
    <property type="match status" value="1"/>
</dbReference>
<dbReference type="SUPFAM" id="SSF54928">
    <property type="entry name" value="RNA-binding domain, RBD"/>
    <property type="match status" value="1"/>
</dbReference>
<dbReference type="PROSITE" id="PS50102">
    <property type="entry name" value="RRM"/>
    <property type="match status" value="1"/>
</dbReference>
<reference key="1">
    <citation type="journal article" date="2007" name="Nat. Biotechnol.">
        <title>Genome sequence of the lignocellulose-bioconverting and xylose-fermenting yeast Pichia stipitis.</title>
        <authorList>
            <person name="Jeffries T.W."/>
            <person name="Grigoriev I.V."/>
            <person name="Grimwood J."/>
            <person name="Laplaza J.M."/>
            <person name="Aerts A."/>
            <person name="Salamov A."/>
            <person name="Schmutz J."/>
            <person name="Lindquist E."/>
            <person name="Dehal P."/>
            <person name="Shapiro H."/>
            <person name="Jin Y.-S."/>
            <person name="Passoth V."/>
            <person name="Richardson P.M."/>
        </authorList>
    </citation>
    <scope>NUCLEOTIDE SEQUENCE [LARGE SCALE GENOMIC DNA]</scope>
    <source>
        <strain>ATCC 58785 / CBS 6054 / NBRC 10063 / NRRL Y-11545</strain>
    </source>
</reference>
<organism>
    <name type="scientific">Scheffersomyces stipitis (strain ATCC 58785 / CBS 6054 / NBRC 10063 / NRRL Y-11545)</name>
    <name type="common">Yeast</name>
    <name type="synonym">Pichia stipitis</name>
    <dbReference type="NCBI Taxonomy" id="322104"/>
    <lineage>
        <taxon>Eukaryota</taxon>
        <taxon>Fungi</taxon>
        <taxon>Dikarya</taxon>
        <taxon>Ascomycota</taxon>
        <taxon>Saccharomycotina</taxon>
        <taxon>Pichiomycetes</taxon>
        <taxon>Debaryomycetaceae</taxon>
        <taxon>Scheffersomyces</taxon>
    </lineage>
</organism>
<feature type="chain" id="PRO_0000366894" description="Eukaryotic translation initiation factor 3 subunit G">
    <location>
        <begin position="1"/>
        <end position="271"/>
    </location>
</feature>
<feature type="domain" description="RRM" evidence="1">
    <location>
        <begin position="188"/>
        <end position="267"/>
    </location>
</feature>
<feature type="region of interest" description="Disordered" evidence="2">
    <location>
        <begin position="1"/>
        <end position="26"/>
    </location>
</feature>
<feature type="region of interest" description="Disordered" evidence="2">
    <location>
        <begin position="63"/>
        <end position="119"/>
    </location>
</feature>
<feature type="region of interest" description="Disordered" evidence="2">
    <location>
        <begin position="147"/>
        <end position="187"/>
    </location>
</feature>
<feature type="modified residue" description="Phosphoserine" evidence="1">
    <location>
        <position position="77"/>
    </location>
</feature>
<accession>A3GGU2</accession>
<comment type="function">
    <text evidence="1">RNA-binding component of the eukaryotic translation initiation factor 3 (eIF-3) complex, which is involved in protein synthesis of a specialized repertoire of mRNAs and, together with other initiation factors, stimulates binding of mRNA and methionyl-tRNAi to the 40S ribosome. The eIF-3 complex specifically targets and initiates translation of a subset of mRNAs involved in cell proliferation. This subunit can bind 18S rRNA.</text>
</comment>
<comment type="subunit">
    <text evidence="1">Component of the eukaryotic translation initiation factor 3 (eIF-3) complex.</text>
</comment>
<comment type="subcellular location">
    <subcellularLocation>
        <location evidence="1">Cytoplasm</location>
    </subcellularLocation>
</comment>
<comment type="similarity">
    <text evidence="1">Belongs to the eIF-3 subunit G family.</text>
</comment>
<protein>
    <recommendedName>
        <fullName evidence="1">Eukaryotic translation initiation factor 3 subunit G</fullName>
        <shortName evidence="1">eIF3g</shortName>
    </recommendedName>
    <alternativeName>
        <fullName evidence="1">Eukaryotic translation initiation factor 3 RNA-binding subunit</fullName>
        <shortName evidence="1">eIF-3 RNA-binding subunit</shortName>
    </alternativeName>
    <alternativeName>
        <fullName evidence="1">Translation initiation factor eIF3 p33 subunit homolog</fullName>
        <shortName evidence="1">eIF3 p33 homolog</shortName>
    </alternativeName>
</protein>
<sequence>MSTTVIGSWADAGDEFSAPDITTNPDGTKTVITYRTNQDGKKVKITQKIKEVKVQERVHPLIAQRKNWKKYGKESKSPPGPDTSTTQLGEKVELKLGTSWKQQEKEEEEEKAENRAQKLSVQTIRCRTCGGDHYTSKCPFKDTLGATTSSPAAESGAGDNGPGKYVPRHLRADANGNLPSKEGRDDSTTLKVSQLNSFVDEDMLRNELFARFGPLQRVTLVRNRETGDSRGFAYVSFITEDMAQRALDALNGKGYHSLILHLEWSKKKKTV</sequence>
<proteinExistence type="inferred from homology"/>
<gene>
    <name evidence="1" type="primary">TIF35</name>
    <name type="ORF">PICST_80765</name>
</gene>
<evidence type="ECO:0000255" key="1">
    <source>
        <dbReference type="HAMAP-Rule" id="MF_03006"/>
    </source>
</evidence>
<evidence type="ECO:0000256" key="2">
    <source>
        <dbReference type="SAM" id="MobiDB-lite"/>
    </source>
</evidence>
<keyword id="KW-0963">Cytoplasm</keyword>
<keyword id="KW-0396">Initiation factor</keyword>
<keyword id="KW-0597">Phosphoprotein</keyword>
<keyword id="KW-0648">Protein biosynthesis</keyword>
<keyword id="KW-1185">Reference proteome</keyword>
<keyword id="KW-0694">RNA-binding</keyword>
<name>EIF3G_PICST</name>